<accession>B2T739</accession>
<sequence length="179" mass="19979">MARLQEFYKEKVVPGLIEKFGYKSVMEVPRITKITLNMGLGEAVADKKIIENAVGDLTKIAGQKPVITKARKAIAGFKIRQGYPIGAMVTLRGQAMYEFLDRFVTVALPRVRDFRGVSGRAFDGRGNYNIGVKEQIIFPEIDYDKIDALRGLNISITTTAKTDDEAKALLASFKFPFRN</sequence>
<gene>
    <name evidence="1" type="primary">rplE</name>
    <name type="ordered locus">Bphyt_3632</name>
</gene>
<evidence type="ECO:0000255" key="1">
    <source>
        <dbReference type="HAMAP-Rule" id="MF_01333"/>
    </source>
</evidence>
<evidence type="ECO:0000305" key="2"/>
<protein>
    <recommendedName>
        <fullName evidence="1">Large ribosomal subunit protein uL5</fullName>
    </recommendedName>
    <alternativeName>
        <fullName evidence="2">50S ribosomal protein L5</fullName>
    </alternativeName>
</protein>
<name>RL5_PARPJ</name>
<keyword id="KW-0687">Ribonucleoprotein</keyword>
<keyword id="KW-0689">Ribosomal protein</keyword>
<keyword id="KW-0694">RNA-binding</keyword>
<keyword id="KW-0699">rRNA-binding</keyword>
<keyword id="KW-0820">tRNA-binding</keyword>
<dbReference type="EMBL" id="CP001052">
    <property type="protein sequence ID" value="ACD18022.1"/>
    <property type="molecule type" value="Genomic_DNA"/>
</dbReference>
<dbReference type="RefSeq" id="WP_006052214.1">
    <property type="nucleotide sequence ID" value="NC_010681.1"/>
</dbReference>
<dbReference type="SMR" id="B2T739"/>
<dbReference type="STRING" id="398527.Bphyt_3632"/>
<dbReference type="GeneID" id="97311004"/>
<dbReference type="KEGG" id="bpy:Bphyt_3632"/>
<dbReference type="eggNOG" id="COG0094">
    <property type="taxonomic scope" value="Bacteria"/>
</dbReference>
<dbReference type="HOGENOM" id="CLU_061015_2_1_4"/>
<dbReference type="OrthoDB" id="9806626at2"/>
<dbReference type="Proteomes" id="UP000001739">
    <property type="component" value="Chromosome 1"/>
</dbReference>
<dbReference type="GO" id="GO:1990904">
    <property type="term" value="C:ribonucleoprotein complex"/>
    <property type="evidence" value="ECO:0007669"/>
    <property type="project" value="UniProtKB-KW"/>
</dbReference>
<dbReference type="GO" id="GO:0005840">
    <property type="term" value="C:ribosome"/>
    <property type="evidence" value="ECO:0007669"/>
    <property type="project" value="UniProtKB-KW"/>
</dbReference>
<dbReference type="GO" id="GO:0019843">
    <property type="term" value="F:rRNA binding"/>
    <property type="evidence" value="ECO:0007669"/>
    <property type="project" value="UniProtKB-UniRule"/>
</dbReference>
<dbReference type="GO" id="GO:0003735">
    <property type="term" value="F:structural constituent of ribosome"/>
    <property type="evidence" value="ECO:0007669"/>
    <property type="project" value="InterPro"/>
</dbReference>
<dbReference type="GO" id="GO:0000049">
    <property type="term" value="F:tRNA binding"/>
    <property type="evidence" value="ECO:0007669"/>
    <property type="project" value="UniProtKB-UniRule"/>
</dbReference>
<dbReference type="GO" id="GO:0006412">
    <property type="term" value="P:translation"/>
    <property type="evidence" value="ECO:0007669"/>
    <property type="project" value="UniProtKB-UniRule"/>
</dbReference>
<dbReference type="FunFam" id="3.30.1440.10:FF:000001">
    <property type="entry name" value="50S ribosomal protein L5"/>
    <property type="match status" value="1"/>
</dbReference>
<dbReference type="Gene3D" id="3.30.1440.10">
    <property type="match status" value="1"/>
</dbReference>
<dbReference type="HAMAP" id="MF_01333_B">
    <property type="entry name" value="Ribosomal_uL5_B"/>
    <property type="match status" value="1"/>
</dbReference>
<dbReference type="InterPro" id="IPR002132">
    <property type="entry name" value="Ribosomal_uL5"/>
</dbReference>
<dbReference type="InterPro" id="IPR020930">
    <property type="entry name" value="Ribosomal_uL5_bac-type"/>
</dbReference>
<dbReference type="InterPro" id="IPR031309">
    <property type="entry name" value="Ribosomal_uL5_C"/>
</dbReference>
<dbReference type="InterPro" id="IPR020929">
    <property type="entry name" value="Ribosomal_uL5_CS"/>
</dbReference>
<dbReference type="InterPro" id="IPR022803">
    <property type="entry name" value="Ribosomal_uL5_dom_sf"/>
</dbReference>
<dbReference type="InterPro" id="IPR031310">
    <property type="entry name" value="Ribosomal_uL5_N"/>
</dbReference>
<dbReference type="NCBIfam" id="NF000585">
    <property type="entry name" value="PRK00010.1"/>
    <property type="match status" value="1"/>
</dbReference>
<dbReference type="PANTHER" id="PTHR11994">
    <property type="entry name" value="60S RIBOSOMAL PROTEIN L11-RELATED"/>
    <property type="match status" value="1"/>
</dbReference>
<dbReference type="Pfam" id="PF00281">
    <property type="entry name" value="Ribosomal_L5"/>
    <property type="match status" value="1"/>
</dbReference>
<dbReference type="Pfam" id="PF00673">
    <property type="entry name" value="Ribosomal_L5_C"/>
    <property type="match status" value="1"/>
</dbReference>
<dbReference type="PIRSF" id="PIRSF002161">
    <property type="entry name" value="Ribosomal_L5"/>
    <property type="match status" value="1"/>
</dbReference>
<dbReference type="SUPFAM" id="SSF55282">
    <property type="entry name" value="RL5-like"/>
    <property type="match status" value="1"/>
</dbReference>
<dbReference type="PROSITE" id="PS00358">
    <property type="entry name" value="RIBOSOMAL_L5"/>
    <property type="match status" value="1"/>
</dbReference>
<reference key="1">
    <citation type="journal article" date="2011" name="J. Bacteriol.">
        <title>Complete genome sequence of the plant growth-promoting endophyte Burkholderia phytofirmans strain PsJN.</title>
        <authorList>
            <person name="Weilharter A."/>
            <person name="Mitter B."/>
            <person name="Shin M.V."/>
            <person name="Chain P.S."/>
            <person name="Nowak J."/>
            <person name="Sessitsch A."/>
        </authorList>
    </citation>
    <scope>NUCLEOTIDE SEQUENCE [LARGE SCALE GENOMIC DNA]</scope>
    <source>
        <strain>DSM 17436 / LMG 22146 / PsJN</strain>
    </source>
</reference>
<organism>
    <name type="scientific">Paraburkholderia phytofirmans (strain DSM 17436 / LMG 22146 / PsJN)</name>
    <name type="common">Burkholderia phytofirmans</name>
    <dbReference type="NCBI Taxonomy" id="398527"/>
    <lineage>
        <taxon>Bacteria</taxon>
        <taxon>Pseudomonadati</taxon>
        <taxon>Pseudomonadota</taxon>
        <taxon>Betaproteobacteria</taxon>
        <taxon>Burkholderiales</taxon>
        <taxon>Burkholderiaceae</taxon>
        <taxon>Paraburkholderia</taxon>
    </lineage>
</organism>
<feature type="chain" id="PRO_1000142368" description="Large ribosomal subunit protein uL5">
    <location>
        <begin position="1"/>
        <end position="179"/>
    </location>
</feature>
<comment type="function">
    <text evidence="1">This is one of the proteins that bind and probably mediate the attachment of the 5S RNA into the large ribosomal subunit, where it forms part of the central protuberance. In the 70S ribosome it contacts protein S13 of the 30S subunit (bridge B1b), connecting the 2 subunits; this bridge is implicated in subunit movement. Contacts the P site tRNA; the 5S rRNA and some of its associated proteins might help stabilize positioning of ribosome-bound tRNAs.</text>
</comment>
<comment type="subunit">
    <text evidence="1">Part of the 50S ribosomal subunit; part of the 5S rRNA/L5/L18/L25 subcomplex. Contacts the 5S rRNA and the P site tRNA. Forms a bridge to the 30S subunit in the 70S ribosome.</text>
</comment>
<comment type="similarity">
    <text evidence="1">Belongs to the universal ribosomal protein uL5 family.</text>
</comment>
<proteinExistence type="inferred from homology"/>